<gene>
    <name evidence="1" type="primary">infC</name>
    <name type="ordered locus">MPN_115</name>
    <name type="ORF">MP039</name>
</gene>
<keyword id="KW-0963">Cytoplasm</keyword>
<keyword id="KW-0396">Initiation factor</keyword>
<keyword id="KW-0648">Protein biosynthesis</keyword>
<keyword id="KW-1185">Reference proteome</keyword>
<proteinExistence type="inferred from homology"/>
<name>IF3_MYCPN</name>
<evidence type="ECO:0000255" key="1">
    <source>
        <dbReference type="HAMAP-Rule" id="MF_00080"/>
    </source>
</evidence>
<accession>P78024</accession>
<reference key="1">
    <citation type="journal article" date="1996" name="Nucleic Acids Res.">
        <title>Complete sequence analysis of the genome of the bacterium Mycoplasma pneumoniae.</title>
        <authorList>
            <person name="Himmelreich R."/>
            <person name="Hilbert H."/>
            <person name="Plagens H."/>
            <person name="Pirkl E."/>
            <person name="Li B.-C."/>
            <person name="Herrmann R."/>
        </authorList>
    </citation>
    <scope>NUCLEOTIDE SEQUENCE [LARGE SCALE GENOMIC DNA]</scope>
    <source>
        <strain>ATCC 29342 / M129 / Subtype 1</strain>
    </source>
</reference>
<dbReference type="EMBL" id="U00089">
    <property type="protein sequence ID" value="AAG34732.1"/>
    <property type="molecule type" value="Genomic_DNA"/>
</dbReference>
<dbReference type="PIR" id="S73365">
    <property type="entry name" value="S73365"/>
</dbReference>
<dbReference type="RefSeq" id="NP_109803.1">
    <property type="nucleotide sequence ID" value="NC_000912.1"/>
</dbReference>
<dbReference type="SMR" id="P78024"/>
<dbReference type="IntAct" id="P78024">
    <property type="interactions" value="3"/>
</dbReference>
<dbReference type="STRING" id="272634.MPN_115"/>
<dbReference type="EnsemblBacteria" id="AAG34732">
    <property type="protein sequence ID" value="AAG34732"/>
    <property type="gene ID" value="MPN_115"/>
</dbReference>
<dbReference type="KEGG" id="mpn:MPN_115"/>
<dbReference type="PATRIC" id="fig|272634.6.peg.122"/>
<dbReference type="HOGENOM" id="CLU_054919_3_2_14"/>
<dbReference type="OrthoDB" id="397792at2"/>
<dbReference type="BioCyc" id="MPNE272634:G1GJ3-194-MONOMER"/>
<dbReference type="Proteomes" id="UP000000808">
    <property type="component" value="Chromosome"/>
</dbReference>
<dbReference type="GO" id="GO:0005829">
    <property type="term" value="C:cytosol"/>
    <property type="evidence" value="ECO:0007669"/>
    <property type="project" value="TreeGrafter"/>
</dbReference>
<dbReference type="GO" id="GO:0016020">
    <property type="term" value="C:membrane"/>
    <property type="evidence" value="ECO:0007669"/>
    <property type="project" value="TreeGrafter"/>
</dbReference>
<dbReference type="GO" id="GO:0043022">
    <property type="term" value="F:ribosome binding"/>
    <property type="evidence" value="ECO:0007669"/>
    <property type="project" value="TreeGrafter"/>
</dbReference>
<dbReference type="GO" id="GO:0003743">
    <property type="term" value="F:translation initiation factor activity"/>
    <property type="evidence" value="ECO:0007669"/>
    <property type="project" value="UniProtKB-UniRule"/>
</dbReference>
<dbReference type="GO" id="GO:0032790">
    <property type="term" value="P:ribosome disassembly"/>
    <property type="evidence" value="ECO:0007669"/>
    <property type="project" value="TreeGrafter"/>
</dbReference>
<dbReference type="Gene3D" id="3.30.110.10">
    <property type="entry name" value="Translation initiation factor 3 (IF-3), C-terminal domain"/>
    <property type="match status" value="1"/>
</dbReference>
<dbReference type="Gene3D" id="3.10.20.80">
    <property type="entry name" value="Translation initiation factor 3 (IF-3), N-terminal domain"/>
    <property type="match status" value="1"/>
</dbReference>
<dbReference type="HAMAP" id="MF_00080">
    <property type="entry name" value="IF_3"/>
    <property type="match status" value="1"/>
</dbReference>
<dbReference type="InterPro" id="IPR036788">
    <property type="entry name" value="T_IF-3_C_sf"/>
</dbReference>
<dbReference type="InterPro" id="IPR036787">
    <property type="entry name" value="T_IF-3_N_sf"/>
</dbReference>
<dbReference type="InterPro" id="IPR019813">
    <property type="entry name" value="Translation_initiation_fac3_CS"/>
</dbReference>
<dbReference type="InterPro" id="IPR001288">
    <property type="entry name" value="Translation_initiation_fac_3"/>
</dbReference>
<dbReference type="InterPro" id="IPR019815">
    <property type="entry name" value="Translation_initiation_fac_3_C"/>
</dbReference>
<dbReference type="InterPro" id="IPR019814">
    <property type="entry name" value="Translation_initiation_fac_3_N"/>
</dbReference>
<dbReference type="NCBIfam" id="TIGR00168">
    <property type="entry name" value="infC"/>
    <property type="match status" value="1"/>
</dbReference>
<dbReference type="PANTHER" id="PTHR10938">
    <property type="entry name" value="TRANSLATION INITIATION FACTOR IF-3"/>
    <property type="match status" value="1"/>
</dbReference>
<dbReference type="PANTHER" id="PTHR10938:SF0">
    <property type="entry name" value="TRANSLATION INITIATION FACTOR IF-3, MITOCHONDRIAL"/>
    <property type="match status" value="1"/>
</dbReference>
<dbReference type="Pfam" id="PF00707">
    <property type="entry name" value="IF3_C"/>
    <property type="match status" value="1"/>
</dbReference>
<dbReference type="Pfam" id="PF05198">
    <property type="entry name" value="IF3_N"/>
    <property type="match status" value="1"/>
</dbReference>
<dbReference type="SUPFAM" id="SSF55200">
    <property type="entry name" value="Translation initiation factor IF3, C-terminal domain"/>
    <property type="match status" value="1"/>
</dbReference>
<dbReference type="SUPFAM" id="SSF54364">
    <property type="entry name" value="Translation initiation factor IF3, N-terminal domain"/>
    <property type="match status" value="1"/>
</dbReference>
<dbReference type="PROSITE" id="PS00938">
    <property type="entry name" value="IF3"/>
    <property type="match status" value="1"/>
</dbReference>
<protein>
    <recommendedName>
        <fullName evidence="1">Translation initiation factor IF-3</fullName>
    </recommendedName>
</protein>
<feature type="chain" id="PRO_0000177543" description="Translation initiation factor IF-3">
    <location>
        <begin position="1"/>
        <end position="201"/>
    </location>
</feature>
<sequence>MPLILDQGCFVSESRFHRLAQNIKQGSRREREQKPLINDKIGFNEFILIDENGSNLGTVRRTDALKMAEEKQLDLVLIGSNPAKPIVKLLDFGRYTYDLKRKKRQSKKNQTIIQIKEVVVKPTIAKHDLEFKAKQTTGWAEKGYHVKFVVRAFGRVSTRIELIEKVFNDFYLLVEPAVEVQKPLTASSKTMYSALLVPRKK</sequence>
<organism>
    <name type="scientific">Mycoplasma pneumoniae (strain ATCC 29342 / M129 / Subtype 1)</name>
    <name type="common">Mycoplasmoides pneumoniae</name>
    <dbReference type="NCBI Taxonomy" id="272634"/>
    <lineage>
        <taxon>Bacteria</taxon>
        <taxon>Bacillati</taxon>
        <taxon>Mycoplasmatota</taxon>
        <taxon>Mycoplasmoidales</taxon>
        <taxon>Mycoplasmoidaceae</taxon>
        <taxon>Mycoplasmoides</taxon>
    </lineage>
</organism>
<comment type="function">
    <text evidence="1">IF-3 binds to the 30S ribosomal subunit and shifts the equilibrium between 70S ribosomes and their 50S and 30S subunits in favor of the free subunits, thus enhancing the availability of 30S subunits on which protein synthesis initiation begins.</text>
</comment>
<comment type="subunit">
    <text evidence="1">Monomer.</text>
</comment>
<comment type="subcellular location">
    <subcellularLocation>
        <location evidence="1">Cytoplasm</location>
    </subcellularLocation>
</comment>
<comment type="similarity">
    <text evidence="1">Belongs to the IF-3 family.</text>
</comment>